<name>Y089_LEGPH</name>
<sequence length="148" mass="16490">MTIWIDADACPKMIKDILFRAAIRTNTNLILVANSYLTYPNSPFIRSVLVEKGYDRADHYITSHMKAKDLVITADIPLAAEVIVKQGLAMSPRGELFTANNIKQRLTLRDINEQLRSAGERTGGPSALSAKEKTNFANALDRWLAKSK</sequence>
<feature type="chain" id="PRO_0000175987" description="UPF0178 protein lpg0089">
    <location>
        <begin position="1"/>
        <end position="148"/>
    </location>
</feature>
<reference key="1">
    <citation type="journal article" date="2004" name="Science">
        <title>The genomic sequence of the accidental pathogen Legionella pneumophila.</title>
        <authorList>
            <person name="Chien M."/>
            <person name="Morozova I."/>
            <person name="Shi S."/>
            <person name="Sheng H."/>
            <person name="Chen J."/>
            <person name="Gomez S.M."/>
            <person name="Asamani G."/>
            <person name="Hill K."/>
            <person name="Nuara J."/>
            <person name="Feder M."/>
            <person name="Rineer J."/>
            <person name="Greenberg J.J."/>
            <person name="Steshenko V."/>
            <person name="Park S.H."/>
            <person name="Zhao B."/>
            <person name="Teplitskaya E."/>
            <person name="Edwards J.R."/>
            <person name="Pampou S."/>
            <person name="Georghiou A."/>
            <person name="Chou I.-C."/>
            <person name="Iannuccilli W."/>
            <person name="Ulz M.E."/>
            <person name="Kim D.H."/>
            <person name="Geringer-Sameth A."/>
            <person name="Goldsberry C."/>
            <person name="Morozov P."/>
            <person name="Fischer S.G."/>
            <person name="Segal G."/>
            <person name="Qu X."/>
            <person name="Rzhetsky A."/>
            <person name="Zhang P."/>
            <person name="Cayanis E."/>
            <person name="De Jong P.J."/>
            <person name="Ju J."/>
            <person name="Kalachikov S."/>
            <person name="Shuman H.A."/>
            <person name="Russo J.J."/>
        </authorList>
    </citation>
    <scope>NUCLEOTIDE SEQUENCE [LARGE SCALE GENOMIC DNA]</scope>
    <source>
        <strain>Philadelphia 1 / ATCC 33152 / DSM 7513</strain>
    </source>
</reference>
<protein>
    <recommendedName>
        <fullName evidence="1">UPF0178 protein lpg0089</fullName>
    </recommendedName>
</protein>
<proteinExistence type="inferred from homology"/>
<accession>Q5ZZC2</accession>
<organism>
    <name type="scientific">Legionella pneumophila subsp. pneumophila (strain Philadelphia 1 / ATCC 33152 / DSM 7513)</name>
    <dbReference type="NCBI Taxonomy" id="272624"/>
    <lineage>
        <taxon>Bacteria</taxon>
        <taxon>Pseudomonadati</taxon>
        <taxon>Pseudomonadota</taxon>
        <taxon>Gammaproteobacteria</taxon>
        <taxon>Legionellales</taxon>
        <taxon>Legionellaceae</taxon>
        <taxon>Legionella</taxon>
    </lineage>
</organism>
<dbReference type="EMBL" id="AE017354">
    <property type="protein sequence ID" value="AAU26196.1"/>
    <property type="molecule type" value="Genomic_DNA"/>
</dbReference>
<dbReference type="RefSeq" id="WP_010945850.1">
    <property type="nucleotide sequence ID" value="NC_002942.5"/>
</dbReference>
<dbReference type="RefSeq" id="YP_094143.1">
    <property type="nucleotide sequence ID" value="NC_002942.5"/>
</dbReference>
<dbReference type="STRING" id="272624.lpg0089"/>
<dbReference type="PaxDb" id="272624-lpg0089"/>
<dbReference type="KEGG" id="lpn:lpg0089"/>
<dbReference type="PATRIC" id="fig|272624.6.peg.94"/>
<dbReference type="eggNOG" id="COG1671">
    <property type="taxonomic scope" value="Bacteria"/>
</dbReference>
<dbReference type="HOGENOM" id="CLU_106619_2_1_6"/>
<dbReference type="OrthoDB" id="9798918at2"/>
<dbReference type="Proteomes" id="UP000000609">
    <property type="component" value="Chromosome"/>
</dbReference>
<dbReference type="CDD" id="cd18720">
    <property type="entry name" value="PIN_YqxD-like"/>
    <property type="match status" value="1"/>
</dbReference>
<dbReference type="HAMAP" id="MF_00489">
    <property type="entry name" value="UPF0178"/>
    <property type="match status" value="1"/>
</dbReference>
<dbReference type="InterPro" id="IPR003791">
    <property type="entry name" value="UPF0178"/>
</dbReference>
<dbReference type="NCBIfam" id="NF001095">
    <property type="entry name" value="PRK00124.1"/>
    <property type="match status" value="1"/>
</dbReference>
<dbReference type="PANTHER" id="PTHR35146">
    <property type="entry name" value="UPF0178 PROTEIN YAII"/>
    <property type="match status" value="1"/>
</dbReference>
<dbReference type="PANTHER" id="PTHR35146:SF1">
    <property type="entry name" value="UPF0178 PROTEIN YAII"/>
    <property type="match status" value="1"/>
</dbReference>
<dbReference type="Pfam" id="PF02639">
    <property type="entry name" value="DUF188"/>
    <property type="match status" value="1"/>
</dbReference>
<gene>
    <name type="ordered locus">lpg0089</name>
</gene>
<comment type="similarity">
    <text evidence="1">Belongs to the UPF0178 family.</text>
</comment>
<evidence type="ECO:0000255" key="1">
    <source>
        <dbReference type="HAMAP-Rule" id="MF_00489"/>
    </source>
</evidence>
<keyword id="KW-1185">Reference proteome</keyword>